<protein>
    <recommendedName>
        <fullName>Toluene efflux pump periplasmic linker protein TtgA</fullName>
    </recommendedName>
</protein>
<comment type="function">
    <text>The periplasmic linker protein component of a constitutive organic solvent efflux system. Involved in export of toluene, styrene, m-xylene, propylbenzene and ethylbenzene. Also exports AMP and the antibiotics carbenicillin, nalidixic acid, chloramphenicol and tetracycline.</text>
</comment>
<comment type="subcellular location">
    <subcellularLocation>
        <location evidence="5">Cell inner membrane</location>
        <topology evidence="2">Lipid-anchor</topology>
    </subcellularLocation>
</comment>
<comment type="induction">
    <text evidence="4">The ttgABC operon is repressed by toluene; this is mediated by TtgR. The ttgABC operon is induced in response to chloramphenicol and tetracycline.</text>
</comment>
<comment type="similarity">
    <text evidence="5">Belongs to the membrane fusion protein (MFP) (TC 8.A.1) family.</text>
</comment>
<comment type="caution">
    <text evidence="5">There are 4 nearly identical operons in various strains of P.putida. This one and the mepABC operon of strain KT2442-TOL function in solvent and antibiotic efflux; however the arpABC operon of strain S12 functions only in antibiotic efflux. This may be due to different protein expression levels. In strain KT2440 the equivalent operon does not seem to function in toluene efflux.</text>
</comment>
<name>TTGA_PSEPT</name>
<reference key="1">
    <citation type="journal article" date="1998" name="J. Bacteriol.">
        <title>Efflux pumps involved in toluene tolerance in Pseudomonas putida DOT-T1E.</title>
        <authorList>
            <person name="Ramos J.L."/>
            <person name="Duque E."/>
            <person name="Godoy P."/>
            <person name="Segura A."/>
        </authorList>
    </citation>
    <scope>NUCLEOTIDE SEQUENCE [GENOMIC DNA]</scope>
    <source>
        <strain>DOT-T1E</strain>
    </source>
</reference>
<reference key="2">
    <citation type="journal article" date="2013" name="Microb. Biotechnol.">
        <title>Metabolic potential of the organic-solvent tolerant Pseudomonas putida DOT-T1E deduced from its annotated genome.</title>
        <authorList>
            <person name="Udaondo Z."/>
            <person name="Molina L."/>
            <person name="Daniels C."/>
            <person name="Gomez M.J."/>
            <person name="Molina-Henares M.A."/>
            <person name="Matilla M.A."/>
            <person name="Roca A."/>
            <person name="Fernandez M."/>
            <person name="Duque E."/>
            <person name="Segura A."/>
            <person name="Ramos J.L."/>
        </authorList>
    </citation>
    <scope>NUCLEOTIDE SEQUENCE [LARGE SCALE GENOMIC DNA]</scope>
    <source>
        <strain>DOT-T1E</strain>
    </source>
</reference>
<reference key="3">
    <citation type="journal article" date="2001" name="J. Bacteriol.">
        <title>Three efflux pumps are required to provide efficient tolerance to toluene in Pseudomonas putida DOT-T1E.</title>
        <authorList>
            <person name="Rojas A."/>
            <person name="Duque E."/>
            <person name="Mosqueda G."/>
            <person name="Golden G."/>
            <person name="Hurtado A."/>
            <person name="Ramos J.L."/>
            <person name="Segura A."/>
        </authorList>
    </citation>
    <scope>EFFLUX PUMP SUBSTRATES</scope>
    <source>
        <strain>DOT-T1E</strain>
    </source>
</reference>
<reference key="4">
    <citation type="journal article" date="2003" name="Antimicrob. Agents Chemother.">
        <title>Antibiotic-dependent induction of Pseudomonas putida DOT-T1E TtgABC efflux pump is mediated by the drug binding repressor TtgR.</title>
        <authorList>
            <person name="Teran W."/>
            <person name="Felipe A."/>
            <person name="Segura A."/>
            <person name="Rojas A."/>
            <person name="Ramos J.L."/>
            <person name="Gallegos M.T."/>
        </authorList>
    </citation>
    <scope>INDUCTION</scope>
    <source>
        <strain>DOT-T1E</strain>
    </source>
</reference>
<keyword id="KW-0046">Antibiotic resistance</keyword>
<keyword id="KW-0997">Cell inner membrane</keyword>
<keyword id="KW-1003">Cell membrane</keyword>
<keyword id="KW-0175">Coiled coil</keyword>
<keyword id="KW-0449">Lipoprotein</keyword>
<keyword id="KW-0472">Membrane</keyword>
<keyword id="KW-0564">Palmitate</keyword>
<keyword id="KW-0732">Signal</keyword>
<keyword id="KW-0813">Transport</keyword>
<feature type="signal peptide" evidence="2">
    <location>
        <begin position="1"/>
        <end position="22"/>
    </location>
</feature>
<feature type="chain" id="PRO_0000018718" description="Toluene efflux pump periplasmic linker protein TtgA">
    <location>
        <begin position="23"/>
        <end position="384"/>
    </location>
</feature>
<feature type="region of interest" description="Disordered" evidence="3">
    <location>
        <begin position="362"/>
        <end position="384"/>
    </location>
</feature>
<feature type="coiled-coil region" evidence="1">
    <location>
        <begin position="115"/>
        <end position="155"/>
    </location>
</feature>
<feature type="compositionally biased region" description="Low complexity" evidence="3">
    <location>
        <begin position="368"/>
        <end position="378"/>
    </location>
</feature>
<feature type="lipid moiety-binding region" description="N-palmitoyl cysteine" evidence="2">
    <location>
        <position position="23"/>
    </location>
</feature>
<feature type="lipid moiety-binding region" description="S-diacylglycerol cysteine" evidence="2">
    <location>
        <position position="23"/>
    </location>
</feature>
<sequence>MQFKPAVTALVSAVALATLLSGCKKEEAAPAAQAPQVGVVTIQPQAFTLTSELPGRTSAYRVAEVRPQVNGIILKRLFKEGSEVKEGQQLYQIDPAVYEATLANAKANLLATRSLAERYKQLIDEQAVSKQEYDDANAKRLQAEASLKSAQIDLRYTKVLAPISGRIGRSSFTEGALVSNGQTDAMATIQQLDPIYVDVTQSTAELLKLRRDLESGQLQKAGNNAASVQLVLEDGSLFKQEGRLEFSEVAVDETTGSVTLRALFPNPDHTLLPGMFVHARLKAGVNANAILAPQQGVTRDLKGAPTALVVNQENKVELRQLKASRTLGSDWLIEEGLNPGDRLITEGLQYVRPGVEVKVSDATNVKKPAGPDQANAAKADAKAE</sequence>
<evidence type="ECO:0000255" key="1"/>
<evidence type="ECO:0000255" key="2">
    <source>
        <dbReference type="PROSITE-ProRule" id="PRU00303"/>
    </source>
</evidence>
<evidence type="ECO:0000256" key="3">
    <source>
        <dbReference type="SAM" id="MobiDB-lite"/>
    </source>
</evidence>
<evidence type="ECO:0000269" key="4">
    <source>
    </source>
</evidence>
<evidence type="ECO:0000305" key="5"/>
<dbReference type="EMBL" id="AF031417">
    <property type="protein sequence ID" value="AAD39553.1"/>
    <property type="molecule type" value="Genomic_DNA"/>
</dbReference>
<dbReference type="EMBL" id="CP003734">
    <property type="protein sequence ID" value="AFO46102.1"/>
    <property type="molecule type" value="Genomic_DNA"/>
</dbReference>
<dbReference type="RefSeq" id="WP_014592249.1">
    <property type="nucleotide sequence ID" value="NC_018220.1"/>
</dbReference>
<dbReference type="SMR" id="Q9WWZ9"/>
<dbReference type="TCDB" id="2.A.6.2.9">
    <property type="family name" value="the resistance-nodulation-cell division (rnd) superfamily"/>
</dbReference>
<dbReference type="KEGG" id="ppx:T1E_0243"/>
<dbReference type="PATRIC" id="fig|1196325.3.peg.244"/>
<dbReference type="HOGENOM" id="CLU_018816_2_1_6"/>
<dbReference type="Proteomes" id="UP000006503">
    <property type="component" value="Chromosome"/>
</dbReference>
<dbReference type="GO" id="GO:0005886">
    <property type="term" value="C:plasma membrane"/>
    <property type="evidence" value="ECO:0007669"/>
    <property type="project" value="UniProtKB-SubCell"/>
</dbReference>
<dbReference type="GO" id="GO:0022857">
    <property type="term" value="F:transmembrane transporter activity"/>
    <property type="evidence" value="ECO:0007669"/>
    <property type="project" value="InterPro"/>
</dbReference>
<dbReference type="GO" id="GO:0046677">
    <property type="term" value="P:response to antibiotic"/>
    <property type="evidence" value="ECO:0007669"/>
    <property type="project" value="UniProtKB-KW"/>
</dbReference>
<dbReference type="FunFam" id="2.40.420.20:FF:000001">
    <property type="entry name" value="Efflux RND transporter periplasmic adaptor subunit"/>
    <property type="match status" value="1"/>
</dbReference>
<dbReference type="FunFam" id="2.40.30.170:FF:000001">
    <property type="entry name" value="Multidrug resistance efflux transporter MdtE"/>
    <property type="match status" value="1"/>
</dbReference>
<dbReference type="Gene3D" id="2.40.30.170">
    <property type="match status" value="1"/>
</dbReference>
<dbReference type="Gene3D" id="2.40.420.20">
    <property type="match status" value="1"/>
</dbReference>
<dbReference type="Gene3D" id="2.40.50.100">
    <property type="match status" value="1"/>
</dbReference>
<dbReference type="Gene3D" id="1.10.287.470">
    <property type="entry name" value="Helix hairpin bin"/>
    <property type="match status" value="1"/>
</dbReference>
<dbReference type="InterPro" id="IPR043602">
    <property type="entry name" value="CusB-like_dom_1"/>
</dbReference>
<dbReference type="InterPro" id="IPR032317">
    <property type="entry name" value="CusB_D23"/>
</dbReference>
<dbReference type="InterPro" id="IPR051160">
    <property type="entry name" value="MFP_Efflux"/>
</dbReference>
<dbReference type="InterPro" id="IPR006143">
    <property type="entry name" value="RND_pump_MFP"/>
</dbReference>
<dbReference type="NCBIfam" id="TIGR01730">
    <property type="entry name" value="RND_mfp"/>
    <property type="match status" value="1"/>
</dbReference>
<dbReference type="PANTHER" id="PTHR30158">
    <property type="entry name" value="ACRA/E-RELATED COMPONENT OF DRUG EFFLUX TRANSPORTER"/>
    <property type="match status" value="1"/>
</dbReference>
<dbReference type="PANTHER" id="PTHR30158:SF3">
    <property type="entry name" value="MULTIDRUG EFFLUX PUMP SUBUNIT ACRA-RELATED"/>
    <property type="match status" value="1"/>
</dbReference>
<dbReference type="Pfam" id="PF00529">
    <property type="entry name" value="CusB_dom_1"/>
    <property type="match status" value="1"/>
</dbReference>
<dbReference type="Pfam" id="PF16576">
    <property type="entry name" value="HlyD_D23"/>
    <property type="match status" value="1"/>
</dbReference>
<dbReference type="SUPFAM" id="SSF111369">
    <property type="entry name" value="HlyD-like secretion proteins"/>
    <property type="match status" value="1"/>
</dbReference>
<dbReference type="PROSITE" id="PS51257">
    <property type="entry name" value="PROKAR_LIPOPROTEIN"/>
    <property type="match status" value="1"/>
</dbReference>
<accession>Q9WWZ9</accession>
<accession>I7BPU0</accession>
<gene>
    <name type="primary">ttgA</name>
    <name type="ordered locus">T1E_0243</name>
</gene>
<organism>
    <name type="scientific">Pseudomonas putida (strain DOT-T1E)</name>
    <dbReference type="NCBI Taxonomy" id="1196325"/>
    <lineage>
        <taxon>Bacteria</taxon>
        <taxon>Pseudomonadati</taxon>
        <taxon>Pseudomonadota</taxon>
        <taxon>Gammaproteobacteria</taxon>
        <taxon>Pseudomonadales</taxon>
        <taxon>Pseudomonadaceae</taxon>
        <taxon>Pseudomonas</taxon>
    </lineage>
</organism>
<proteinExistence type="evidence at transcript level"/>